<sequence>MNMPQLSTIQIGDHELAYLDNKLTSAVTPTIVMLPGWCGDHHSFSELIPQLNDTHRVVAVNWRGHAPVPHDVSDFGYAEQAQDALAILDAIGVDEFLPVSASHGGWALVQLLVDAGPARARAGVVLDWLMRRPTPEFTAALLSLQDPEGWVDSCRALFHTWRPNDSDWVESRVERAKEFGFDMWARSGRVISGAYGEHGTPLEFMKTITPERHIRHLFSTPSDSDYVAPQEAFASENEWFSYALLGGTSHFPHLEMPDRVAAHIVELAKNTYQAGAMR</sequence>
<reference key="1">
    <citation type="journal article" date="2015" name="J. Biotechnol.">
        <title>Complete genome sequence of Rhodococcus erythropolis BG43 (DSM 46869), a degrader of Pseudomonas aeruginosa quorum sensing signal molecules.</title>
        <authorList>
            <person name="Rueckert C."/>
            <person name="Birmes F.S."/>
            <person name="Mueller C."/>
            <person name="Niewerth H."/>
            <person name="Winkler A."/>
            <person name="Fetzner S."/>
            <person name="Kalinowski J."/>
        </authorList>
    </citation>
    <scope>NUCLEOTIDE SEQUENCE [LARGE SCALE GENOMIC DNA]</scope>
    <source>
        <strain>DSM 46869 / BG43</strain>
    </source>
</reference>
<reference key="2">
    <citation type="journal article" date="2015" name="Appl. Environ. Microbiol.">
        <title>Rhodococcus erythropolis BG43 genes mediating Pseudomonas aeruginosa quinolone signal degradation and virulence factor attenuation.</title>
        <authorList>
            <person name="Mueller C."/>
            <person name="Birmes F.S."/>
            <person name="Rueckert C."/>
            <person name="Kalinowski J."/>
            <person name="Fetzner S."/>
        </authorList>
    </citation>
    <scope>FUNCTION</scope>
    <scope>CATALYTIC ACTIVITY</scope>
    <scope>BIOPHYSICOCHEMICAL PROPERTIES</scope>
    <scope>INDUCTION</scope>
    <source>
        <strain>DSM 46869 / BG43</strain>
    </source>
</reference>
<evidence type="ECO:0000250" key="1">
    <source>
        <dbReference type="UniProtKB" id="B1MFK2"/>
    </source>
</evidence>
<evidence type="ECO:0000255" key="2"/>
<evidence type="ECO:0000269" key="3">
    <source>
    </source>
</evidence>
<evidence type="ECO:0000303" key="4">
    <source>
    </source>
</evidence>
<evidence type="ECO:0000305" key="5"/>
<evidence type="ECO:0000312" key="6">
    <source>
        <dbReference type="EMBL" id="AKE01130.1"/>
    </source>
</evidence>
<feature type="chain" id="PRO_0000447583" description="2-heptyl-3-hydroxy-4-quinolone dioxygenase AqdC1">
    <location>
        <begin position="1"/>
        <end position="278"/>
    </location>
</feature>
<feature type="domain" description="AB hydrolase-1" evidence="2">
    <location>
        <begin position="29"/>
        <end position="158"/>
    </location>
</feature>
<feature type="active site" description="Proton donor/acceptor" evidence="1">
    <location>
        <position position="250"/>
    </location>
</feature>
<feature type="binding site" evidence="1">
    <location>
        <position position="103"/>
    </location>
    <ligand>
        <name>substrate</name>
    </ligand>
</feature>
<feature type="site" description="Increases basicity of active site His" evidence="1">
    <location>
        <position position="127"/>
    </location>
</feature>
<protein>
    <recommendedName>
        <fullName evidence="5">2-heptyl-3-hydroxy-4-quinolone dioxygenase AqdC1</fullName>
        <shortName evidence="4">PQS dioxygenase</shortName>
        <ecNumber evidence="3">1.13.11.-</ecNumber>
    </recommendedName>
</protein>
<geneLocation type="plasmid">
    <name>pRLCBG43</name>
</geneLocation>
<dbReference type="EC" id="1.13.11.-" evidence="3"/>
<dbReference type="EMBL" id="CP011296">
    <property type="protein sequence ID" value="AKE01130.1"/>
    <property type="molecule type" value="Genomic_DNA"/>
</dbReference>
<dbReference type="RefSeq" id="WP_046380173.1">
    <property type="nucleotide sequence ID" value="NZ_CP011296.1"/>
</dbReference>
<dbReference type="SMR" id="A0A0E4AE72"/>
<dbReference type="ESTHER" id="rhoer-aqdC1">
    <property type="family name" value="HOD-cofactorfree-dioxygenase"/>
</dbReference>
<dbReference type="ESTHER" id="rhoer-aqdC2">
    <property type="family name" value="HOD-cofactorfree-dioxygenase"/>
</dbReference>
<dbReference type="KEGG" id="reb:XU06_29640"/>
<dbReference type="PATRIC" id="fig|1833.80.peg.6103"/>
<dbReference type="GO" id="GO:0051213">
    <property type="term" value="F:dioxygenase activity"/>
    <property type="evidence" value="ECO:0007669"/>
    <property type="project" value="UniProtKB-KW"/>
</dbReference>
<dbReference type="Gene3D" id="1.10.210.20">
    <property type="match status" value="1"/>
</dbReference>
<dbReference type="Gene3D" id="3.40.50.1820">
    <property type="entry name" value="alpha/beta hydrolase"/>
    <property type="match status" value="1"/>
</dbReference>
<dbReference type="InterPro" id="IPR000073">
    <property type="entry name" value="AB_hydrolase_1"/>
</dbReference>
<dbReference type="InterPro" id="IPR029058">
    <property type="entry name" value="AB_hydrolase_fold"/>
</dbReference>
<dbReference type="InterPro" id="IPR050228">
    <property type="entry name" value="Carboxylesterase_BioH"/>
</dbReference>
<dbReference type="PANTHER" id="PTHR43194">
    <property type="entry name" value="HYDROLASE ALPHA/BETA FOLD FAMILY"/>
    <property type="match status" value="1"/>
</dbReference>
<dbReference type="PANTHER" id="PTHR43194:SF2">
    <property type="entry name" value="PEROXISOMAL MEMBRANE PROTEIN LPX1"/>
    <property type="match status" value="1"/>
</dbReference>
<dbReference type="Pfam" id="PF12697">
    <property type="entry name" value="Abhydrolase_6"/>
    <property type="match status" value="1"/>
</dbReference>
<dbReference type="SUPFAM" id="SSF53474">
    <property type="entry name" value="alpha/beta-Hydrolases"/>
    <property type="match status" value="1"/>
</dbReference>
<gene>
    <name evidence="4" type="primary">aqdC1</name>
    <name evidence="6" type="ORF">XU06_29640</name>
</gene>
<organism>
    <name type="scientific">Rhodococcus erythropolis</name>
    <name type="common">Arthrobacter picolinophilus</name>
    <dbReference type="NCBI Taxonomy" id="1833"/>
    <lineage>
        <taxon>Bacteria</taxon>
        <taxon>Bacillati</taxon>
        <taxon>Actinomycetota</taxon>
        <taxon>Actinomycetes</taxon>
        <taxon>Mycobacteriales</taxon>
        <taxon>Nocardiaceae</taxon>
        <taxon>Rhodococcus</taxon>
        <taxon>Rhodococcus erythropolis group</taxon>
    </lineage>
</organism>
<comment type="function">
    <text evidence="3">Involved in the degradation of the Pseudomonas aeruginosa quorum sensing signal molecules HHQ (2-heptyl-4-quinolone) and PQS (2-heptyl-3-hydroxy-4-quinolone) to anthranilic acid. Catalyzes the cleavage of PQS to form N-octanoylanthranilic acid and carbon monoxide.</text>
</comment>
<comment type="catalytic activity">
    <reaction evidence="3">
        <text>2-heptyl-3-hydroxy-4(1H)-quinolone + O2 = N-octanoylanthranilate + CO + H(+)</text>
        <dbReference type="Rhea" id="RHEA:60352"/>
        <dbReference type="ChEBI" id="CHEBI:15378"/>
        <dbReference type="ChEBI" id="CHEBI:15379"/>
        <dbReference type="ChEBI" id="CHEBI:17245"/>
        <dbReference type="ChEBI" id="CHEBI:29472"/>
        <dbReference type="ChEBI" id="CHEBI:143722"/>
    </reaction>
    <physiologicalReaction direction="left-to-right" evidence="3">
        <dbReference type="Rhea" id="RHEA:60353"/>
    </physiologicalReaction>
</comment>
<comment type="biophysicochemical properties">
    <kinetics>
        <KM evidence="3">27 uM for PQS</KM>
        <text evidence="3">kcat is 20.5 sec(-1).</text>
    </kinetics>
</comment>
<comment type="induction">
    <text evidence="3">Up-regulated by PQS.</text>
</comment>
<comment type="similarity">
    <text evidence="5">Belongs to the AB hydrolase superfamily.</text>
</comment>
<accession>A0A0E4AE72</accession>
<name>AQDC1_RHOER</name>
<keyword id="KW-0223">Dioxygenase</keyword>
<keyword id="KW-0560">Oxidoreductase</keyword>
<keyword id="KW-0614">Plasmid</keyword>
<proteinExistence type="evidence at protein level"/>